<proteinExistence type="inferred from homology"/>
<organism>
    <name type="scientific">Shewanella sp. (strain MR-4)</name>
    <dbReference type="NCBI Taxonomy" id="60480"/>
    <lineage>
        <taxon>Bacteria</taxon>
        <taxon>Pseudomonadati</taxon>
        <taxon>Pseudomonadota</taxon>
        <taxon>Gammaproteobacteria</taxon>
        <taxon>Alteromonadales</taxon>
        <taxon>Shewanellaceae</taxon>
        <taxon>Shewanella</taxon>
    </lineage>
</organism>
<keyword id="KW-0997">Cell inner membrane</keyword>
<keyword id="KW-1003">Cell membrane</keyword>
<keyword id="KW-0249">Electron transport</keyword>
<keyword id="KW-0472">Membrane</keyword>
<keyword id="KW-1278">Translocase</keyword>
<keyword id="KW-0812">Transmembrane</keyword>
<keyword id="KW-1133">Transmembrane helix</keyword>
<keyword id="KW-0813">Transport</keyword>
<comment type="function">
    <text evidence="1">Part of a membrane-bound complex that couples electron transfer with translocation of ions across the membrane.</text>
</comment>
<comment type="subunit">
    <text evidence="1">The complex is composed of six subunits: RnfA, RnfB, RnfC, RnfD, RnfE and RnfG.</text>
</comment>
<comment type="subcellular location">
    <subcellularLocation>
        <location evidence="1">Cell inner membrane</location>
        <topology evidence="1">Multi-pass membrane protein</topology>
    </subcellularLocation>
</comment>
<comment type="similarity">
    <text evidence="1">Belongs to the NqrDE/RnfAE family.</text>
</comment>
<reference key="1">
    <citation type="submission" date="2006-08" db="EMBL/GenBank/DDBJ databases">
        <title>Complete sequence of Shewanella sp. MR-4.</title>
        <authorList>
            <consortium name="US DOE Joint Genome Institute"/>
            <person name="Copeland A."/>
            <person name="Lucas S."/>
            <person name="Lapidus A."/>
            <person name="Barry K."/>
            <person name="Detter J.C."/>
            <person name="Glavina del Rio T."/>
            <person name="Hammon N."/>
            <person name="Israni S."/>
            <person name="Dalin E."/>
            <person name="Tice H."/>
            <person name="Pitluck S."/>
            <person name="Kiss H."/>
            <person name="Brettin T."/>
            <person name="Bruce D."/>
            <person name="Han C."/>
            <person name="Tapia R."/>
            <person name="Gilna P."/>
            <person name="Schmutz J."/>
            <person name="Larimer F."/>
            <person name="Land M."/>
            <person name="Hauser L."/>
            <person name="Kyrpides N."/>
            <person name="Mikhailova N."/>
            <person name="Nealson K."/>
            <person name="Konstantinidis K."/>
            <person name="Klappenbach J."/>
            <person name="Tiedje J."/>
            <person name="Richardson P."/>
        </authorList>
    </citation>
    <scope>NUCLEOTIDE SEQUENCE [LARGE SCALE GENOMIC DNA]</scope>
    <source>
        <strain>MR-4</strain>
    </source>
</reference>
<name>RNFE_SHESM</name>
<evidence type="ECO:0000255" key="1">
    <source>
        <dbReference type="HAMAP-Rule" id="MF_00478"/>
    </source>
</evidence>
<dbReference type="EC" id="7.-.-.-" evidence="1"/>
<dbReference type="EMBL" id="CP000446">
    <property type="protein sequence ID" value="ABI39142.1"/>
    <property type="molecule type" value="Genomic_DNA"/>
</dbReference>
<dbReference type="RefSeq" id="WP_011622832.1">
    <property type="nucleotide sequence ID" value="NC_008321.1"/>
</dbReference>
<dbReference type="SMR" id="Q0HIH5"/>
<dbReference type="KEGG" id="she:Shewmr4_2069"/>
<dbReference type="HOGENOM" id="CLU_046659_1_0_6"/>
<dbReference type="GO" id="GO:0005886">
    <property type="term" value="C:plasma membrane"/>
    <property type="evidence" value="ECO:0007669"/>
    <property type="project" value="UniProtKB-SubCell"/>
</dbReference>
<dbReference type="GO" id="GO:0022900">
    <property type="term" value="P:electron transport chain"/>
    <property type="evidence" value="ECO:0007669"/>
    <property type="project" value="UniProtKB-UniRule"/>
</dbReference>
<dbReference type="HAMAP" id="MF_00478">
    <property type="entry name" value="RsxE_RnfE"/>
    <property type="match status" value="1"/>
</dbReference>
<dbReference type="InterPro" id="IPR003667">
    <property type="entry name" value="NqrDE/RnfAE"/>
</dbReference>
<dbReference type="InterPro" id="IPR010968">
    <property type="entry name" value="RnfE"/>
</dbReference>
<dbReference type="NCBIfam" id="NF009070">
    <property type="entry name" value="PRK12405.1"/>
    <property type="match status" value="1"/>
</dbReference>
<dbReference type="NCBIfam" id="TIGR01948">
    <property type="entry name" value="rnfE"/>
    <property type="match status" value="1"/>
</dbReference>
<dbReference type="PANTHER" id="PTHR30586">
    <property type="entry name" value="ELECTRON TRANSPORT COMPLEX PROTEIN RNFE"/>
    <property type="match status" value="1"/>
</dbReference>
<dbReference type="PANTHER" id="PTHR30586:SF0">
    <property type="entry name" value="ION-TRANSLOCATING OXIDOREDUCTASE COMPLEX SUBUNIT E"/>
    <property type="match status" value="1"/>
</dbReference>
<dbReference type="Pfam" id="PF02508">
    <property type="entry name" value="Rnf-Nqr"/>
    <property type="match status" value="1"/>
</dbReference>
<dbReference type="PIRSF" id="PIRSF006102">
    <property type="entry name" value="NQR_DE"/>
    <property type="match status" value="1"/>
</dbReference>
<feature type="chain" id="PRO_1000014106" description="Ion-translocating oxidoreductase complex subunit E">
    <location>
        <begin position="1"/>
        <end position="232"/>
    </location>
</feature>
<feature type="transmembrane region" description="Helical" evidence="1">
    <location>
        <begin position="18"/>
        <end position="38"/>
    </location>
</feature>
<feature type="transmembrane region" description="Helical" evidence="1">
    <location>
        <begin position="39"/>
        <end position="59"/>
    </location>
</feature>
<feature type="transmembrane region" description="Helical" evidence="1">
    <location>
        <begin position="69"/>
        <end position="89"/>
    </location>
</feature>
<feature type="transmembrane region" description="Helical" evidence="1">
    <location>
        <begin position="93"/>
        <end position="113"/>
    </location>
</feature>
<feature type="transmembrane region" description="Helical" evidence="1">
    <location>
        <begin position="127"/>
        <end position="147"/>
    </location>
</feature>
<feature type="transmembrane region" description="Helical" evidence="1">
    <location>
        <begin position="182"/>
        <end position="202"/>
    </location>
</feature>
<protein>
    <recommendedName>
        <fullName evidence="1">Ion-translocating oxidoreductase complex subunit E</fullName>
        <ecNumber evidence="1">7.-.-.-</ecNumber>
    </recommendedName>
    <alternativeName>
        <fullName evidence="1">Rnf electron transport complex subunit E</fullName>
    </alternativeName>
</protein>
<gene>
    <name evidence="1" type="primary">rnfE</name>
    <name type="ordered locus">Shewmr4_2069</name>
</gene>
<sequence>MTNYREIAWQGLWKNNPGLVQLLGLCPLLAVTATLTNALGLGVATMLVLIGSNILVSLVRDYVPKEIRIPVFVMIIAALVTAVQLLINAYAYGLYLSLGIFLPLIVTNCIIIGRAEAFASRNNAFSAAFDGLMMGLGFTLVLAVLGATREILGQGTLFDGADQLLGPWAKALTIQVWQVDTPFLLAMLPPGAFIVMGLLIALKNVIDKKLKERQPEAAVQPSVTRARITKVS</sequence>
<accession>Q0HIH5</accession>